<feature type="peptide" id="PRO_0000456300" description="Annulatin" evidence="1">
    <location>
        <begin position="1"/>
        <end position="11"/>
    </location>
</feature>
<feature type="modified residue" description="Glycine amide" evidence="1">
    <location>
        <position position="11"/>
    </location>
</feature>
<dbReference type="GO" id="GO:0005576">
    <property type="term" value="C:extracellular region"/>
    <property type="evidence" value="ECO:0007669"/>
    <property type="project" value="UniProtKB-SubCell"/>
</dbReference>
<comment type="function">
    <text evidence="1">Amphiphilic linear alpha-helical peptide that shows histamine releasing activity from mast cells. Also shows low hemolytic activity, but no antimicrobial activities against all bacteria tested (E.coli, S.aureus, and S.cerevisiae).</text>
</comment>
<comment type="subcellular location">
    <subcellularLocation>
        <location evidence="1">Secreted</location>
    </subcellularLocation>
</comment>
<comment type="tissue specificity">
    <text evidence="4">Expressed by the venom gland.</text>
</comment>
<comment type="mass spectrometry" mass="1128.69" method="Electrospray" evidence="1"/>
<comment type="similarity">
    <text evidence="3">Belongs to the bradykinin-related peptide family.</text>
</comment>
<evidence type="ECO:0000269" key="1">
    <source>
    </source>
</evidence>
<evidence type="ECO:0000303" key="2">
    <source>
    </source>
</evidence>
<evidence type="ECO:0000305" key="3"/>
<evidence type="ECO:0000305" key="4">
    <source>
    </source>
</evidence>
<keyword id="KW-0027">Amidation</keyword>
<keyword id="KW-0903">Direct protein sequencing</keyword>
<keyword id="KW-0964">Secreted</keyword>
<sequence length="11" mass="1129">ISEALKSIIVG</sequence>
<reference key="1">
    <citation type="journal article" date="2021" name="Toxins">
        <title>Comprehensive analysis and biological characterization of venom components from solitary scoliid wasp a annulata annulata.</title>
        <authorList>
            <person name="Alberto-Silva C."/>
            <person name="Vieira Portaro F.C."/>
            <person name="Kodama R.T."/>
            <person name="Pantaleao H.Q."/>
            <person name="Inagaki H."/>
            <person name="Nihei K.I."/>
            <person name="Konno K."/>
        </authorList>
    </citation>
    <scope>PROTEIN SEQUENCE</scope>
    <scope>FUNCTION</scope>
    <scope>SUBCELLULAR LOCATION</scope>
    <scope>MASS SPECTROMETRY</scope>
    <scope>AMIDATION AT GLY-11</scope>
    <scope>SYNTHESIS</scope>
    <source>
        <tissue>Venom</tissue>
    </source>
</reference>
<accession>P0DW51</accession>
<protein>
    <recommendedName>
        <fullName evidence="2">Annulatin</fullName>
    </recommendedName>
    <alternativeName>
        <fullName evidence="2">Linear alpha-helical peptide</fullName>
    </alternativeName>
</protein>
<organism>
    <name type="scientific">Campsomeriella annulata</name>
    <name type="common">Wasp</name>
    <name type="synonym">Campsomeris annulata</name>
    <dbReference type="NCBI Taxonomy" id="1574124"/>
    <lineage>
        <taxon>Eukaryota</taxon>
        <taxon>Metazoa</taxon>
        <taxon>Ecdysozoa</taxon>
        <taxon>Arthropoda</taxon>
        <taxon>Hexapoda</taxon>
        <taxon>Insecta</taxon>
        <taxon>Pterygota</taxon>
        <taxon>Neoptera</taxon>
        <taxon>Endopterygota</taxon>
        <taxon>Hymenoptera</taxon>
        <taxon>Apocrita</taxon>
        <taxon>Aculeata</taxon>
        <taxon>Scolioidea</taxon>
        <taxon>Scoliidae</taxon>
        <taxon>Campsomeriella</taxon>
    </lineage>
</organism>
<name>ANNU_CAMAN</name>
<proteinExistence type="evidence at protein level"/>